<feature type="chain" id="PRO_1000133229" description="Protein SprT-like">
    <location>
        <begin position="1"/>
        <end position="152"/>
    </location>
</feature>
<feature type="domain" description="SprT-like" evidence="1">
    <location>
        <begin position="7"/>
        <end position="147"/>
    </location>
</feature>
<feature type="active site" evidence="1">
    <location>
        <position position="68"/>
    </location>
</feature>
<feature type="binding site" evidence="1">
    <location>
        <position position="67"/>
    </location>
    <ligand>
        <name>Zn(2+)</name>
        <dbReference type="ChEBI" id="CHEBI:29105"/>
    </ligand>
</feature>
<feature type="binding site" evidence="1">
    <location>
        <position position="71"/>
    </location>
    <ligand>
        <name>Zn(2+)</name>
        <dbReference type="ChEBI" id="CHEBI:29105"/>
    </ligand>
</feature>
<accession>B7IU36</accession>
<protein>
    <recommendedName>
        <fullName evidence="1">Protein SprT-like</fullName>
    </recommendedName>
</protein>
<evidence type="ECO:0000255" key="1">
    <source>
        <dbReference type="HAMAP-Rule" id="MF_00745"/>
    </source>
</evidence>
<organism>
    <name type="scientific">Bacillus cereus (strain G9842)</name>
    <dbReference type="NCBI Taxonomy" id="405531"/>
    <lineage>
        <taxon>Bacteria</taxon>
        <taxon>Bacillati</taxon>
        <taxon>Bacillota</taxon>
        <taxon>Bacilli</taxon>
        <taxon>Bacillales</taxon>
        <taxon>Bacillaceae</taxon>
        <taxon>Bacillus</taxon>
        <taxon>Bacillus cereus group</taxon>
    </lineage>
</organism>
<reference key="1">
    <citation type="submission" date="2008-10" db="EMBL/GenBank/DDBJ databases">
        <title>Genome sequence of Bacillus cereus G9842.</title>
        <authorList>
            <person name="Dodson R.J."/>
            <person name="Durkin A.S."/>
            <person name="Rosovitz M.J."/>
            <person name="Rasko D.A."/>
            <person name="Hoffmaster A."/>
            <person name="Ravel J."/>
            <person name="Sutton G."/>
        </authorList>
    </citation>
    <scope>NUCLEOTIDE SEQUENCE [LARGE SCALE GENOMIC DNA]</scope>
    <source>
        <strain>G9842</strain>
    </source>
</reference>
<sequence>MDEKEIQRLVEEVSLQYFGMPFLHKVKFNSRLRTTGGRYLLKSHNVELNYRYYEMYGKEELIGIIKHELCHYHLHITGRGYKHRDRDFRELLKKVDAPRFCKRMINEEKEKKIYKYECMECLLQYVRRRQINTKRYVCGKCKGKLKPISKTS</sequence>
<name>SPRTL_BACC2</name>
<keyword id="KW-0963">Cytoplasm</keyword>
<keyword id="KW-0479">Metal-binding</keyword>
<keyword id="KW-0862">Zinc</keyword>
<proteinExistence type="inferred from homology"/>
<comment type="cofactor">
    <cofactor evidence="1">
        <name>Zn(2+)</name>
        <dbReference type="ChEBI" id="CHEBI:29105"/>
    </cofactor>
    <text evidence="1">Binds 1 zinc ion.</text>
</comment>
<comment type="subcellular location">
    <subcellularLocation>
        <location evidence="1">Cytoplasm</location>
    </subcellularLocation>
</comment>
<comment type="similarity">
    <text evidence="1">Belongs to the SprT family.</text>
</comment>
<dbReference type="EMBL" id="CP001186">
    <property type="protein sequence ID" value="ACK98389.1"/>
    <property type="molecule type" value="Genomic_DNA"/>
</dbReference>
<dbReference type="RefSeq" id="WP_000343552.1">
    <property type="nucleotide sequence ID" value="NC_011772.1"/>
</dbReference>
<dbReference type="SMR" id="B7IU36"/>
<dbReference type="KEGG" id="bcg:BCG9842_B5054"/>
<dbReference type="HOGENOM" id="CLU_123820_0_0_9"/>
<dbReference type="Proteomes" id="UP000006744">
    <property type="component" value="Chromosome"/>
</dbReference>
<dbReference type="GO" id="GO:0005737">
    <property type="term" value="C:cytoplasm"/>
    <property type="evidence" value="ECO:0007669"/>
    <property type="project" value="UniProtKB-SubCell"/>
</dbReference>
<dbReference type="GO" id="GO:0008270">
    <property type="term" value="F:zinc ion binding"/>
    <property type="evidence" value="ECO:0007669"/>
    <property type="project" value="UniProtKB-UniRule"/>
</dbReference>
<dbReference type="GO" id="GO:0006950">
    <property type="term" value="P:response to stress"/>
    <property type="evidence" value="ECO:0007669"/>
    <property type="project" value="UniProtKB-ARBA"/>
</dbReference>
<dbReference type="HAMAP" id="MF_00745">
    <property type="entry name" value="SprT_like"/>
    <property type="match status" value="1"/>
</dbReference>
<dbReference type="InterPro" id="IPR006640">
    <property type="entry name" value="SprT-like_domain"/>
</dbReference>
<dbReference type="InterPro" id="IPR035240">
    <property type="entry name" value="SprT_Zn_ribbon"/>
</dbReference>
<dbReference type="InterPro" id="IPR023524">
    <property type="entry name" value="Uncharacterised_SprT-like"/>
</dbReference>
<dbReference type="NCBIfam" id="NF003339">
    <property type="entry name" value="PRK04351.1"/>
    <property type="match status" value="1"/>
</dbReference>
<dbReference type="Pfam" id="PF10263">
    <property type="entry name" value="SprT-like"/>
    <property type="match status" value="1"/>
</dbReference>
<dbReference type="Pfam" id="PF17283">
    <property type="entry name" value="Zn_ribbon_SprT"/>
    <property type="match status" value="1"/>
</dbReference>
<dbReference type="SMART" id="SM00731">
    <property type="entry name" value="SprT"/>
    <property type="match status" value="1"/>
</dbReference>
<gene>
    <name type="ordered locus">BCG9842_B5054</name>
</gene>